<accession>A4QEE9</accession>
<name>COXX_CORGB</name>
<gene>
    <name evidence="1" type="primary">ctaB</name>
    <name type="ordered locus">cgR_1623</name>
</gene>
<sequence>MSDLKMQRSGGEPLDTIKAYIALTKPRVIELLLVATIPTMLQAERGENNIVLILLTVFGGWMGAAAANTFNMVADSDIDQRMGRTRARPLVRHTVSNRDASIFAWVLTVASFLWLWLLCDSMLAGIFVLITIFFYIFVYTKWLKRRTHMNIVWGGAAGCMPVLVGWAVIVDQFEPGVPQQWWQAIVLFMVIFFWTPPHTWALAMKYREDYKAAGVPMLPVVRTPVQVTAQIVWYSVATVLTTFLLIPATGWIYAAIAVISGVTFLFMAIKLHLGIKNGGKVKPLKLFILSNNYLAVLFVALSVDAVLGLETIGEMLGWTTTFF</sequence>
<proteinExistence type="inferred from homology"/>
<keyword id="KW-1003">Cell membrane</keyword>
<keyword id="KW-0350">Heme biosynthesis</keyword>
<keyword id="KW-0472">Membrane</keyword>
<keyword id="KW-0808">Transferase</keyword>
<keyword id="KW-0812">Transmembrane</keyword>
<keyword id="KW-1133">Transmembrane helix</keyword>
<evidence type="ECO:0000255" key="1">
    <source>
        <dbReference type="HAMAP-Rule" id="MF_00154"/>
    </source>
</evidence>
<reference key="1">
    <citation type="journal article" date="2007" name="Microbiology">
        <title>Comparative analysis of the Corynebacterium glutamicum group and complete genome sequence of strain R.</title>
        <authorList>
            <person name="Yukawa H."/>
            <person name="Omumasaba C.A."/>
            <person name="Nonaka H."/>
            <person name="Kos P."/>
            <person name="Okai N."/>
            <person name="Suzuki N."/>
            <person name="Suda M."/>
            <person name="Tsuge Y."/>
            <person name="Watanabe J."/>
            <person name="Ikeda Y."/>
            <person name="Vertes A.A."/>
            <person name="Inui M."/>
        </authorList>
    </citation>
    <scope>NUCLEOTIDE SEQUENCE [LARGE SCALE GENOMIC DNA]</scope>
    <source>
        <strain>R</strain>
    </source>
</reference>
<organism>
    <name type="scientific">Corynebacterium glutamicum (strain R)</name>
    <dbReference type="NCBI Taxonomy" id="340322"/>
    <lineage>
        <taxon>Bacteria</taxon>
        <taxon>Bacillati</taxon>
        <taxon>Actinomycetota</taxon>
        <taxon>Actinomycetes</taxon>
        <taxon>Mycobacteriales</taxon>
        <taxon>Corynebacteriaceae</taxon>
        <taxon>Corynebacterium</taxon>
    </lineage>
</organism>
<dbReference type="EC" id="2.5.1.141" evidence="1"/>
<dbReference type="EMBL" id="AP009044">
    <property type="protein sequence ID" value="BAF54615.1"/>
    <property type="molecule type" value="Genomic_DNA"/>
</dbReference>
<dbReference type="SMR" id="A4QEE9"/>
<dbReference type="KEGG" id="cgt:cgR_1623"/>
<dbReference type="HOGENOM" id="CLU_029631_0_1_11"/>
<dbReference type="PhylomeDB" id="A4QEE9"/>
<dbReference type="UniPathway" id="UPA00834">
    <property type="reaction ID" value="UER00712"/>
</dbReference>
<dbReference type="Proteomes" id="UP000006698">
    <property type="component" value="Chromosome"/>
</dbReference>
<dbReference type="GO" id="GO:0005886">
    <property type="term" value="C:plasma membrane"/>
    <property type="evidence" value="ECO:0007669"/>
    <property type="project" value="UniProtKB-SubCell"/>
</dbReference>
<dbReference type="GO" id="GO:0008495">
    <property type="term" value="F:protoheme IX farnesyltransferase activity"/>
    <property type="evidence" value="ECO:0007669"/>
    <property type="project" value="UniProtKB-UniRule"/>
</dbReference>
<dbReference type="GO" id="GO:0048034">
    <property type="term" value="P:heme O biosynthetic process"/>
    <property type="evidence" value="ECO:0007669"/>
    <property type="project" value="UniProtKB-UniRule"/>
</dbReference>
<dbReference type="CDD" id="cd13957">
    <property type="entry name" value="PT_UbiA_Cox10"/>
    <property type="match status" value="1"/>
</dbReference>
<dbReference type="Gene3D" id="1.10.357.140">
    <property type="entry name" value="UbiA prenyltransferase"/>
    <property type="match status" value="1"/>
</dbReference>
<dbReference type="HAMAP" id="MF_00154">
    <property type="entry name" value="CyoE_CtaB"/>
    <property type="match status" value="1"/>
</dbReference>
<dbReference type="InterPro" id="IPR006369">
    <property type="entry name" value="Protohaem_IX_farnesylTrfase"/>
</dbReference>
<dbReference type="InterPro" id="IPR000537">
    <property type="entry name" value="UbiA_prenyltransferase"/>
</dbReference>
<dbReference type="InterPro" id="IPR044878">
    <property type="entry name" value="UbiA_sf"/>
</dbReference>
<dbReference type="NCBIfam" id="TIGR01473">
    <property type="entry name" value="cyoE_ctaB"/>
    <property type="match status" value="1"/>
</dbReference>
<dbReference type="NCBIfam" id="NF003349">
    <property type="entry name" value="PRK04375.1-2"/>
    <property type="match status" value="1"/>
</dbReference>
<dbReference type="PANTHER" id="PTHR43448:SF7">
    <property type="entry name" value="4-HYDROXYBENZOATE SOLANESYLTRANSFERASE"/>
    <property type="match status" value="1"/>
</dbReference>
<dbReference type="PANTHER" id="PTHR43448">
    <property type="entry name" value="PROTOHEME IX FARNESYLTRANSFERASE, MITOCHONDRIAL"/>
    <property type="match status" value="1"/>
</dbReference>
<dbReference type="Pfam" id="PF01040">
    <property type="entry name" value="UbiA"/>
    <property type="match status" value="1"/>
</dbReference>
<protein>
    <recommendedName>
        <fullName evidence="1">Protoheme IX farnesyltransferase</fullName>
        <ecNumber evidence="1">2.5.1.141</ecNumber>
    </recommendedName>
    <alternativeName>
        <fullName evidence="1">Heme B farnesyltransferase</fullName>
    </alternativeName>
    <alternativeName>
        <fullName evidence="1">Heme O synthase</fullName>
    </alternativeName>
</protein>
<comment type="function">
    <text evidence="1">Converts heme B (protoheme IX) to heme O by substitution of the vinyl group on carbon 2 of heme B porphyrin ring with a hydroxyethyl farnesyl side group.</text>
</comment>
<comment type="catalytic activity">
    <reaction evidence="1">
        <text>heme b + (2E,6E)-farnesyl diphosphate + H2O = Fe(II)-heme o + diphosphate</text>
        <dbReference type="Rhea" id="RHEA:28070"/>
        <dbReference type="ChEBI" id="CHEBI:15377"/>
        <dbReference type="ChEBI" id="CHEBI:33019"/>
        <dbReference type="ChEBI" id="CHEBI:60344"/>
        <dbReference type="ChEBI" id="CHEBI:60530"/>
        <dbReference type="ChEBI" id="CHEBI:175763"/>
        <dbReference type="EC" id="2.5.1.141"/>
    </reaction>
</comment>
<comment type="pathway">
    <text evidence="1">Porphyrin-containing compound metabolism; heme O biosynthesis; heme O from protoheme: step 1/1.</text>
</comment>
<comment type="subcellular location">
    <subcellularLocation>
        <location evidence="1">Cell membrane</location>
        <topology evidence="1">Multi-pass membrane protein</topology>
    </subcellularLocation>
</comment>
<comment type="miscellaneous">
    <text evidence="1">Carbon 2 of the heme B porphyrin ring is defined according to the Fischer nomenclature.</text>
</comment>
<comment type="similarity">
    <text evidence="1">Belongs to the UbiA prenyltransferase family. Protoheme IX farnesyltransferase subfamily.</text>
</comment>
<feature type="chain" id="PRO_0000327043" description="Protoheme IX farnesyltransferase">
    <location>
        <begin position="1"/>
        <end position="323"/>
    </location>
</feature>
<feature type="transmembrane region" description="Helical" evidence="1">
    <location>
        <begin position="50"/>
        <end position="70"/>
    </location>
</feature>
<feature type="transmembrane region" description="Helical" evidence="1">
    <location>
        <begin position="97"/>
        <end position="117"/>
    </location>
</feature>
<feature type="transmembrane region" description="Helical" evidence="1">
    <location>
        <begin position="118"/>
        <end position="138"/>
    </location>
</feature>
<feature type="transmembrane region" description="Helical" evidence="1">
    <location>
        <begin position="150"/>
        <end position="170"/>
    </location>
</feature>
<feature type="transmembrane region" description="Helical" evidence="1">
    <location>
        <begin position="184"/>
        <end position="204"/>
    </location>
</feature>
<feature type="transmembrane region" description="Helical" evidence="1">
    <location>
        <begin position="231"/>
        <end position="248"/>
    </location>
</feature>
<feature type="transmembrane region" description="Helical" evidence="1">
    <location>
        <begin position="252"/>
        <end position="274"/>
    </location>
</feature>
<feature type="transmembrane region" description="Helical" evidence="1">
    <location>
        <begin position="293"/>
        <end position="313"/>
    </location>
</feature>